<reference key="1">
    <citation type="journal article" date="2009" name="Vaccine">
        <title>Whole genome sequence analysis of Mycobacterium bovis bacillus Calmette-Guerin (BCG) Tokyo 172: a comparative study of BCG vaccine substrains.</title>
        <authorList>
            <person name="Seki M."/>
            <person name="Honda I."/>
            <person name="Fujita I."/>
            <person name="Yano I."/>
            <person name="Yamamoto S."/>
            <person name="Koyama A."/>
        </authorList>
    </citation>
    <scope>NUCLEOTIDE SEQUENCE [LARGE SCALE GENOMIC DNA]</scope>
    <source>
        <strain>BCG / Tokyo 172 / ATCC 35737 / TMC 1019</strain>
    </source>
</reference>
<accession>C1AN51</accession>
<name>FMT_MYCBT</name>
<proteinExistence type="inferred from homology"/>
<evidence type="ECO:0000255" key="1">
    <source>
        <dbReference type="HAMAP-Rule" id="MF_00182"/>
    </source>
</evidence>
<evidence type="ECO:0000256" key="2">
    <source>
        <dbReference type="SAM" id="MobiDB-lite"/>
    </source>
</evidence>
<dbReference type="EC" id="2.1.2.9" evidence="1"/>
<dbReference type="EMBL" id="AP010918">
    <property type="protein sequence ID" value="BAH25730.1"/>
    <property type="molecule type" value="Genomic_DNA"/>
</dbReference>
<dbReference type="RefSeq" id="WP_003900336.1">
    <property type="nucleotide sequence ID" value="NZ_CP014566.1"/>
</dbReference>
<dbReference type="SMR" id="C1AN51"/>
<dbReference type="GeneID" id="45425384"/>
<dbReference type="KEGG" id="mbt:JTY_1442"/>
<dbReference type="HOGENOM" id="CLU_033347_2_0_11"/>
<dbReference type="GO" id="GO:0005829">
    <property type="term" value="C:cytosol"/>
    <property type="evidence" value="ECO:0007669"/>
    <property type="project" value="TreeGrafter"/>
</dbReference>
<dbReference type="GO" id="GO:0004479">
    <property type="term" value="F:methionyl-tRNA formyltransferase activity"/>
    <property type="evidence" value="ECO:0007669"/>
    <property type="project" value="UniProtKB-UniRule"/>
</dbReference>
<dbReference type="CDD" id="cd08646">
    <property type="entry name" value="FMT_core_Met-tRNA-FMT_N"/>
    <property type="match status" value="1"/>
</dbReference>
<dbReference type="CDD" id="cd08704">
    <property type="entry name" value="Met_tRNA_FMT_C"/>
    <property type="match status" value="1"/>
</dbReference>
<dbReference type="FunFam" id="3.40.50.12230:FF:000001">
    <property type="entry name" value="Methionyl-tRNA formyltransferase"/>
    <property type="match status" value="1"/>
</dbReference>
<dbReference type="Gene3D" id="3.40.50.12230">
    <property type="match status" value="1"/>
</dbReference>
<dbReference type="HAMAP" id="MF_00182">
    <property type="entry name" value="Formyl_trans"/>
    <property type="match status" value="1"/>
</dbReference>
<dbReference type="InterPro" id="IPR005794">
    <property type="entry name" value="Fmt"/>
</dbReference>
<dbReference type="InterPro" id="IPR005793">
    <property type="entry name" value="Formyl_trans_C"/>
</dbReference>
<dbReference type="InterPro" id="IPR002376">
    <property type="entry name" value="Formyl_transf_N"/>
</dbReference>
<dbReference type="InterPro" id="IPR036477">
    <property type="entry name" value="Formyl_transf_N_sf"/>
</dbReference>
<dbReference type="InterPro" id="IPR011034">
    <property type="entry name" value="Formyl_transferase-like_C_sf"/>
</dbReference>
<dbReference type="InterPro" id="IPR044135">
    <property type="entry name" value="Met-tRNA-FMT_C"/>
</dbReference>
<dbReference type="InterPro" id="IPR041711">
    <property type="entry name" value="Met-tRNA-FMT_N"/>
</dbReference>
<dbReference type="NCBIfam" id="TIGR00460">
    <property type="entry name" value="fmt"/>
    <property type="match status" value="1"/>
</dbReference>
<dbReference type="PANTHER" id="PTHR11138">
    <property type="entry name" value="METHIONYL-TRNA FORMYLTRANSFERASE"/>
    <property type="match status" value="1"/>
</dbReference>
<dbReference type="PANTHER" id="PTHR11138:SF5">
    <property type="entry name" value="METHIONYL-TRNA FORMYLTRANSFERASE, MITOCHONDRIAL"/>
    <property type="match status" value="1"/>
</dbReference>
<dbReference type="Pfam" id="PF02911">
    <property type="entry name" value="Formyl_trans_C"/>
    <property type="match status" value="1"/>
</dbReference>
<dbReference type="Pfam" id="PF00551">
    <property type="entry name" value="Formyl_trans_N"/>
    <property type="match status" value="1"/>
</dbReference>
<dbReference type="SUPFAM" id="SSF50486">
    <property type="entry name" value="FMT C-terminal domain-like"/>
    <property type="match status" value="1"/>
</dbReference>
<dbReference type="SUPFAM" id="SSF53328">
    <property type="entry name" value="Formyltransferase"/>
    <property type="match status" value="1"/>
</dbReference>
<organism>
    <name type="scientific">Mycobacterium bovis (strain BCG / Tokyo 172 / ATCC 35737 / TMC 1019)</name>
    <dbReference type="NCBI Taxonomy" id="561275"/>
    <lineage>
        <taxon>Bacteria</taxon>
        <taxon>Bacillati</taxon>
        <taxon>Actinomycetota</taxon>
        <taxon>Actinomycetes</taxon>
        <taxon>Mycobacteriales</taxon>
        <taxon>Mycobacteriaceae</taxon>
        <taxon>Mycobacterium</taxon>
        <taxon>Mycobacterium tuberculosis complex</taxon>
    </lineage>
</organism>
<sequence>MRLVFAGTPEPALASLRRLIESPSHDVIAVLTRPDAASGRRGKPQPSPVAREAAERGIPVLRPSRPNSAEFVAELSDLAPECCAVVAYGALLGGPLLAVPPHGWVNLHFSLLPAWRGAAPVQAAIAAGDTITGATTFQIEPSLDSGPIYGVVTEVIQPTDTAGDLLKRLAVSGAALLSTTLDGIADQRLTPRPQPADGVSVAPKITVANARVRWDLPAAVVERRIRAVTPNPGAWTLIGDLRVKLGPVHLDAAHRPSKPLPPGGIHVERTSVWIGTGSEPVRLGQIQPPGKKLMNAADWARGARLDLAARAT</sequence>
<gene>
    <name evidence="1" type="primary">fmt</name>
    <name type="ordered locus">JTY_1442</name>
</gene>
<keyword id="KW-0648">Protein biosynthesis</keyword>
<keyword id="KW-0808">Transferase</keyword>
<feature type="chain" id="PRO_1000190032" description="Methionyl-tRNA formyltransferase">
    <location>
        <begin position="1"/>
        <end position="312"/>
    </location>
</feature>
<feature type="region of interest" description="Disordered" evidence="2">
    <location>
        <begin position="34"/>
        <end position="54"/>
    </location>
</feature>
<feature type="binding site" evidence="1">
    <location>
        <begin position="110"/>
        <end position="113"/>
    </location>
    <ligand>
        <name>(6S)-5,6,7,8-tetrahydrofolate</name>
        <dbReference type="ChEBI" id="CHEBI:57453"/>
    </ligand>
</feature>
<comment type="function">
    <text evidence="1">Attaches a formyl group to the free amino group of methionyl-tRNA(fMet). The formyl group appears to play a dual role in the initiator identity of N-formylmethionyl-tRNA by promoting its recognition by IF2 and preventing the misappropriation of this tRNA by the elongation apparatus.</text>
</comment>
<comment type="catalytic activity">
    <reaction evidence="1">
        <text>L-methionyl-tRNA(fMet) + (6R)-10-formyltetrahydrofolate = N-formyl-L-methionyl-tRNA(fMet) + (6S)-5,6,7,8-tetrahydrofolate + H(+)</text>
        <dbReference type="Rhea" id="RHEA:24380"/>
        <dbReference type="Rhea" id="RHEA-COMP:9952"/>
        <dbReference type="Rhea" id="RHEA-COMP:9953"/>
        <dbReference type="ChEBI" id="CHEBI:15378"/>
        <dbReference type="ChEBI" id="CHEBI:57453"/>
        <dbReference type="ChEBI" id="CHEBI:78530"/>
        <dbReference type="ChEBI" id="CHEBI:78844"/>
        <dbReference type="ChEBI" id="CHEBI:195366"/>
        <dbReference type="EC" id="2.1.2.9"/>
    </reaction>
</comment>
<comment type="similarity">
    <text evidence="1">Belongs to the Fmt family.</text>
</comment>
<protein>
    <recommendedName>
        <fullName evidence="1">Methionyl-tRNA formyltransferase</fullName>
        <ecNumber evidence="1">2.1.2.9</ecNumber>
    </recommendedName>
</protein>